<feature type="chain" id="PRO_1000024582" description="ATP-dependent Clp protease ATP-binding subunit ClpX">
    <location>
        <begin position="1"/>
        <end position="423"/>
    </location>
</feature>
<feature type="domain" description="ClpX-type ZB" evidence="2">
    <location>
        <begin position="5"/>
        <end position="58"/>
    </location>
</feature>
<feature type="binding site" evidence="2">
    <location>
        <position position="17"/>
    </location>
    <ligand>
        <name>Zn(2+)</name>
        <dbReference type="ChEBI" id="CHEBI:29105"/>
    </ligand>
</feature>
<feature type="binding site" evidence="2">
    <location>
        <position position="20"/>
    </location>
    <ligand>
        <name>Zn(2+)</name>
        <dbReference type="ChEBI" id="CHEBI:29105"/>
    </ligand>
</feature>
<feature type="binding site" evidence="2">
    <location>
        <position position="39"/>
    </location>
    <ligand>
        <name>Zn(2+)</name>
        <dbReference type="ChEBI" id="CHEBI:29105"/>
    </ligand>
</feature>
<feature type="binding site" evidence="2">
    <location>
        <position position="42"/>
    </location>
    <ligand>
        <name>Zn(2+)</name>
        <dbReference type="ChEBI" id="CHEBI:29105"/>
    </ligand>
</feature>
<feature type="binding site" evidence="1">
    <location>
        <begin position="121"/>
        <end position="128"/>
    </location>
    <ligand>
        <name>ATP</name>
        <dbReference type="ChEBI" id="CHEBI:30616"/>
    </ligand>
</feature>
<reference key="1">
    <citation type="submission" date="2006-08" db="EMBL/GenBank/DDBJ databases">
        <title>Complete sequence of Maricaulis maris MCS10.</title>
        <authorList>
            <consortium name="US DOE Joint Genome Institute"/>
            <person name="Copeland A."/>
            <person name="Lucas S."/>
            <person name="Lapidus A."/>
            <person name="Barry K."/>
            <person name="Detter J.C."/>
            <person name="Glavina del Rio T."/>
            <person name="Hammon N."/>
            <person name="Israni S."/>
            <person name="Dalin E."/>
            <person name="Tice H."/>
            <person name="Pitluck S."/>
            <person name="Saunders E."/>
            <person name="Brettin T."/>
            <person name="Bruce D."/>
            <person name="Han C."/>
            <person name="Tapia R."/>
            <person name="Gilna P."/>
            <person name="Schmutz J."/>
            <person name="Larimer F."/>
            <person name="Land M."/>
            <person name="Hauser L."/>
            <person name="Kyrpides N."/>
            <person name="Mikhailova N."/>
            <person name="Viollier P."/>
            <person name="Stephens C."/>
            <person name="Richardson P."/>
        </authorList>
    </citation>
    <scope>NUCLEOTIDE SEQUENCE [LARGE SCALE GENOMIC DNA]</scope>
    <source>
        <strain>MCS10</strain>
    </source>
</reference>
<gene>
    <name evidence="1" type="primary">clpX</name>
    <name type="ordered locus">Mmar10_1339</name>
</gene>
<organism>
    <name type="scientific">Maricaulis maris (strain MCS10)</name>
    <name type="common">Caulobacter maris</name>
    <dbReference type="NCBI Taxonomy" id="394221"/>
    <lineage>
        <taxon>Bacteria</taxon>
        <taxon>Pseudomonadati</taxon>
        <taxon>Pseudomonadota</taxon>
        <taxon>Alphaproteobacteria</taxon>
        <taxon>Maricaulales</taxon>
        <taxon>Maricaulaceae</taxon>
        <taxon>Maricaulis</taxon>
    </lineage>
</organism>
<keyword id="KW-0067">ATP-binding</keyword>
<keyword id="KW-0143">Chaperone</keyword>
<keyword id="KW-0479">Metal-binding</keyword>
<keyword id="KW-0547">Nucleotide-binding</keyword>
<keyword id="KW-1185">Reference proteome</keyword>
<keyword id="KW-0862">Zinc</keyword>
<name>CLPX_MARMM</name>
<evidence type="ECO:0000255" key="1">
    <source>
        <dbReference type="HAMAP-Rule" id="MF_00175"/>
    </source>
</evidence>
<evidence type="ECO:0000255" key="2">
    <source>
        <dbReference type="PROSITE-ProRule" id="PRU01250"/>
    </source>
</evidence>
<sequence length="423" mass="46118">MSKTTGGDSESKNTLYCSFCGKSQHEVRKLIAGPTVFICDECVELCMDIIREENKSSLVKSKEGVPSPQEIFNVLNDYVIGQAHAKRVLAVAVHNHYKRLNHASQNSDVELAKSNILLIGPTGCGKTLLAQTLARILDVPFTMADATTLTEAGYVGEDVENIVLKLLQAADYNVERAQRGIVYIDEIDKISRKSDNPSITRDVSGEGVQQALLKIMEGTVASVPPQGGRKHPQQEFLQVDTTNILFVVGGAFAGLDKVISQRGQGSSIGFGADVREPDARRTGEILREVEPDDLLRFGLIPEFVGRLPVIATLEDLDIGALVQILTEPKNALVKQYQRLFEMEGVGLTFTEDALKAIANRAIARKTGARGLRSIMEGILLETMFDLPSLEGVEEIVVNGEVVDGNAKPLSIYAERKDDKREGA</sequence>
<protein>
    <recommendedName>
        <fullName evidence="1">ATP-dependent Clp protease ATP-binding subunit ClpX</fullName>
    </recommendedName>
</protein>
<proteinExistence type="inferred from homology"/>
<comment type="function">
    <text evidence="1">ATP-dependent specificity component of the Clp protease. It directs the protease to specific substrates. Can perform chaperone functions in the absence of ClpP.</text>
</comment>
<comment type="subunit">
    <text evidence="1">Component of the ClpX-ClpP complex. Forms a hexameric ring that, in the presence of ATP, binds to fourteen ClpP subunits assembled into a disk-like structure with a central cavity, resembling the structure of eukaryotic proteasomes.</text>
</comment>
<comment type="similarity">
    <text evidence="1">Belongs to the ClpX chaperone family.</text>
</comment>
<accession>Q0AQ06</accession>
<dbReference type="EMBL" id="CP000449">
    <property type="protein sequence ID" value="ABI65631.1"/>
    <property type="molecule type" value="Genomic_DNA"/>
</dbReference>
<dbReference type="RefSeq" id="WP_011643278.1">
    <property type="nucleotide sequence ID" value="NC_008347.1"/>
</dbReference>
<dbReference type="SMR" id="Q0AQ06"/>
<dbReference type="STRING" id="394221.Mmar10_1339"/>
<dbReference type="KEGG" id="mmr:Mmar10_1339"/>
<dbReference type="eggNOG" id="COG1219">
    <property type="taxonomic scope" value="Bacteria"/>
</dbReference>
<dbReference type="HOGENOM" id="CLU_014218_8_2_5"/>
<dbReference type="OrthoDB" id="9804062at2"/>
<dbReference type="Proteomes" id="UP000001964">
    <property type="component" value="Chromosome"/>
</dbReference>
<dbReference type="GO" id="GO:0009376">
    <property type="term" value="C:HslUV protease complex"/>
    <property type="evidence" value="ECO:0007669"/>
    <property type="project" value="TreeGrafter"/>
</dbReference>
<dbReference type="GO" id="GO:0005524">
    <property type="term" value="F:ATP binding"/>
    <property type="evidence" value="ECO:0007669"/>
    <property type="project" value="UniProtKB-UniRule"/>
</dbReference>
<dbReference type="GO" id="GO:0016887">
    <property type="term" value="F:ATP hydrolysis activity"/>
    <property type="evidence" value="ECO:0007669"/>
    <property type="project" value="InterPro"/>
</dbReference>
<dbReference type="GO" id="GO:0140662">
    <property type="term" value="F:ATP-dependent protein folding chaperone"/>
    <property type="evidence" value="ECO:0007669"/>
    <property type="project" value="InterPro"/>
</dbReference>
<dbReference type="GO" id="GO:0046983">
    <property type="term" value="F:protein dimerization activity"/>
    <property type="evidence" value="ECO:0007669"/>
    <property type="project" value="InterPro"/>
</dbReference>
<dbReference type="GO" id="GO:0051082">
    <property type="term" value="F:unfolded protein binding"/>
    <property type="evidence" value="ECO:0007669"/>
    <property type="project" value="UniProtKB-UniRule"/>
</dbReference>
<dbReference type="GO" id="GO:0008270">
    <property type="term" value="F:zinc ion binding"/>
    <property type="evidence" value="ECO:0007669"/>
    <property type="project" value="InterPro"/>
</dbReference>
<dbReference type="GO" id="GO:0051301">
    <property type="term" value="P:cell division"/>
    <property type="evidence" value="ECO:0007669"/>
    <property type="project" value="TreeGrafter"/>
</dbReference>
<dbReference type="GO" id="GO:0051603">
    <property type="term" value="P:proteolysis involved in protein catabolic process"/>
    <property type="evidence" value="ECO:0007669"/>
    <property type="project" value="TreeGrafter"/>
</dbReference>
<dbReference type="CDD" id="cd19497">
    <property type="entry name" value="RecA-like_ClpX"/>
    <property type="match status" value="1"/>
</dbReference>
<dbReference type="FunFam" id="1.10.8.60:FF:000002">
    <property type="entry name" value="ATP-dependent Clp protease ATP-binding subunit ClpX"/>
    <property type="match status" value="1"/>
</dbReference>
<dbReference type="FunFam" id="3.40.50.300:FF:000005">
    <property type="entry name" value="ATP-dependent Clp protease ATP-binding subunit ClpX"/>
    <property type="match status" value="1"/>
</dbReference>
<dbReference type="Gene3D" id="1.10.8.60">
    <property type="match status" value="1"/>
</dbReference>
<dbReference type="Gene3D" id="6.20.220.10">
    <property type="entry name" value="ClpX chaperone, C4-type zinc finger domain"/>
    <property type="match status" value="1"/>
</dbReference>
<dbReference type="Gene3D" id="3.40.50.300">
    <property type="entry name" value="P-loop containing nucleotide triphosphate hydrolases"/>
    <property type="match status" value="1"/>
</dbReference>
<dbReference type="HAMAP" id="MF_00175">
    <property type="entry name" value="ClpX"/>
    <property type="match status" value="1"/>
</dbReference>
<dbReference type="InterPro" id="IPR003593">
    <property type="entry name" value="AAA+_ATPase"/>
</dbReference>
<dbReference type="InterPro" id="IPR050052">
    <property type="entry name" value="ATP-dep_Clp_protease_ClpX"/>
</dbReference>
<dbReference type="InterPro" id="IPR003959">
    <property type="entry name" value="ATPase_AAA_core"/>
</dbReference>
<dbReference type="InterPro" id="IPR019489">
    <property type="entry name" value="Clp_ATPase_C"/>
</dbReference>
<dbReference type="InterPro" id="IPR004487">
    <property type="entry name" value="Clp_protease_ATP-bd_su_ClpX"/>
</dbReference>
<dbReference type="InterPro" id="IPR046425">
    <property type="entry name" value="ClpX_bact"/>
</dbReference>
<dbReference type="InterPro" id="IPR027417">
    <property type="entry name" value="P-loop_NTPase"/>
</dbReference>
<dbReference type="InterPro" id="IPR010603">
    <property type="entry name" value="Znf_CppX_C4"/>
</dbReference>
<dbReference type="InterPro" id="IPR038366">
    <property type="entry name" value="Znf_CppX_C4_sf"/>
</dbReference>
<dbReference type="NCBIfam" id="TIGR00382">
    <property type="entry name" value="clpX"/>
    <property type="match status" value="1"/>
</dbReference>
<dbReference type="NCBIfam" id="NF003745">
    <property type="entry name" value="PRK05342.1"/>
    <property type="match status" value="1"/>
</dbReference>
<dbReference type="PANTHER" id="PTHR48102:SF7">
    <property type="entry name" value="ATP-DEPENDENT CLP PROTEASE ATP-BINDING SUBUNIT CLPX-LIKE, MITOCHONDRIAL"/>
    <property type="match status" value="1"/>
</dbReference>
<dbReference type="PANTHER" id="PTHR48102">
    <property type="entry name" value="ATP-DEPENDENT CLP PROTEASE ATP-BINDING SUBUNIT CLPX-LIKE, MITOCHONDRIAL-RELATED"/>
    <property type="match status" value="1"/>
</dbReference>
<dbReference type="Pfam" id="PF07724">
    <property type="entry name" value="AAA_2"/>
    <property type="match status" value="1"/>
</dbReference>
<dbReference type="Pfam" id="PF10431">
    <property type="entry name" value="ClpB_D2-small"/>
    <property type="match status" value="1"/>
</dbReference>
<dbReference type="Pfam" id="PF06689">
    <property type="entry name" value="zf-C4_ClpX"/>
    <property type="match status" value="1"/>
</dbReference>
<dbReference type="SMART" id="SM00382">
    <property type="entry name" value="AAA"/>
    <property type="match status" value="1"/>
</dbReference>
<dbReference type="SMART" id="SM01086">
    <property type="entry name" value="ClpB_D2-small"/>
    <property type="match status" value="1"/>
</dbReference>
<dbReference type="SMART" id="SM00994">
    <property type="entry name" value="zf-C4_ClpX"/>
    <property type="match status" value="1"/>
</dbReference>
<dbReference type="SUPFAM" id="SSF57716">
    <property type="entry name" value="Glucocorticoid receptor-like (DNA-binding domain)"/>
    <property type="match status" value="1"/>
</dbReference>
<dbReference type="SUPFAM" id="SSF52540">
    <property type="entry name" value="P-loop containing nucleoside triphosphate hydrolases"/>
    <property type="match status" value="1"/>
</dbReference>
<dbReference type="PROSITE" id="PS51902">
    <property type="entry name" value="CLPX_ZB"/>
    <property type="match status" value="1"/>
</dbReference>